<organism>
    <name type="scientific">Osteopilus septentrionalis</name>
    <name type="common">Cuban treefrog</name>
    <dbReference type="NCBI Taxonomy" id="317373"/>
    <lineage>
        <taxon>Eukaryota</taxon>
        <taxon>Metazoa</taxon>
        <taxon>Chordata</taxon>
        <taxon>Craniata</taxon>
        <taxon>Vertebrata</taxon>
        <taxon>Euteleostomi</taxon>
        <taxon>Amphibia</taxon>
        <taxon>Batrachia</taxon>
        <taxon>Anura</taxon>
        <taxon>Neobatrachia</taxon>
        <taxon>Hyloidea</taxon>
        <taxon>Hylidae</taxon>
        <taxon>Hylinae</taxon>
        <taxon>Lophiohylini</taxon>
        <taxon>Osteopilus</taxon>
    </lineage>
</organism>
<reference key="1">
    <citation type="journal article" date="2021" name="Rapid Commun. Mass Spectrom.">
        <title>Manual mass spectrometry de novo sequencing of the anionic host defense peptides of the Cuban Treefrog Osteopilus septentrionalis.</title>
        <authorList>
            <person name="Samgina T.Y."/>
            <person name="Tolpina M.D."/>
            <person name="Surin A.K."/>
            <person name="Kovalev S.V."/>
            <person name="Bosch R.A."/>
            <person name="Alonso I.P."/>
            <person name="Garcia F.A."/>
            <person name="Gonzalez Lopez L.J."/>
            <person name="Lebedev A.T."/>
        </authorList>
    </citation>
    <scope>PROTEIN SEQUENCE</scope>
    <scope>MASS SPECTROMETRY</scope>
</reference>
<keyword id="KW-0903">Direct protein sequencing</keyword>
<keyword id="KW-0597">Phosphoprotein</keyword>
<keyword id="KW-0964">Secreted</keyword>
<dbReference type="GO" id="GO:0005576">
    <property type="term" value="C:extracellular region"/>
    <property type="evidence" value="ECO:0007669"/>
    <property type="project" value="UniProtKB-SubCell"/>
</dbReference>
<proteinExistence type="evidence at protein level"/>
<feature type="chain" id="PRO_0000453945" description="Septenin 2">
    <location>
        <begin position="1"/>
        <end position="23"/>
    </location>
</feature>
<feature type="unsure residue" description="L or I" evidence="1">
    <location>
        <position position="1"/>
    </location>
</feature>
<feature type="unsure residue" description="L or I" evidence="1">
    <location>
        <position position="2"/>
    </location>
</feature>
<feature type="unsure residue" description="L or I" evidence="1">
    <location>
        <position position="6"/>
    </location>
</feature>
<feature type="unsure residue" description="L or I" evidence="1">
    <location>
        <position position="10"/>
    </location>
</feature>
<feature type="unsure residue" description="L or I" evidence="1">
    <location>
        <position position="16"/>
    </location>
</feature>
<feature type="unsure residue" description="L or I" evidence="1">
    <location>
        <position position="20"/>
    </location>
</feature>
<feature type="unsure residue" description="L or I" evidence="1">
    <location>
        <position position="22"/>
    </location>
</feature>
<feature type="unsure residue" description="L or I" evidence="1">
    <location>
        <position position="23"/>
    </location>
</feature>
<evidence type="ECO:0000269" key="1">
    <source>
    </source>
</evidence>
<evidence type="ECO:0000303" key="2">
    <source>
    </source>
</evidence>
<evidence type="ECO:0000305" key="3"/>
<evidence type="ECO:0000305" key="4">
    <source>
    </source>
</evidence>
<comment type="function">
    <text evidence="2">May act as an antimicrobial peptide.</text>
</comment>
<comment type="subcellular location">
    <subcellularLocation>
        <location evidence="1">Secreted</location>
    </subcellularLocation>
</comment>
<comment type="tissue specificity">
    <text evidence="4">Expressed in skin glands.</text>
</comment>
<comment type="mass spectrometry"/>
<comment type="similarity">
    <text evidence="3">Belongs to the Frog skin active peptide (FSAP) family. Septenin subfamily.</text>
</comment>
<name>SEP2_OSTSE</name>
<sequence>IIGDTINGAITTADNIAGKIGII</sequence>
<accession>C0HLX2</accession>
<protein>
    <recommendedName>
        <fullName evidence="2">Septenin 2</fullName>
    </recommendedName>
</protein>